<name>RS12_BLOFL</name>
<proteinExistence type="inferred from homology"/>
<reference key="1">
    <citation type="journal article" date="2003" name="Proc. Natl. Acad. Sci. U.S.A.">
        <title>The genome sequence of Blochmannia floridanus: comparative analysis of reduced genomes.</title>
        <authorList>
            <person name="Gil R."/>
            <person name="Silva F.J."/>
            <person name="Zientz E."/>
            <person name="Delmotte F."/>
            <person name="Gonzalez-Candelas F."/>
            <person name="Latorre A."/>
            <person name="Rausell C."/>
            <person name="Kamerbeek J."/>
            <person name="Gadau J."/>
            <person name="Hoelldobler B."/>
            <person name="van Ham R.C.H.J."/>
            <person name="Gross R."/>
            <person name="Moya A."/>
        </authorList>
    </citation>
    <scope>NUCLEOTIDE SEQUENCE [LARGE SCALE GENOMIC DNA]</scope>
</reference>
<gene>
    <name evidence="2" type="primary">rpsL</name>
    <name type="ordered locus">Bfl567</name>
</gene>
<keyword id="KW-0488">Methylation</keyword>
<keyword id="KW-1185">Reference proteome</keyword>
<keyword id="KW-0687">Ribonucleoprotein</keyword>
<keyword id="KW-0689">Ribosomal protein</keyword>
<keyword id="KW-0694">RNA-binding</keyword>
<keyword id="KW-0699">rRNA-binding</keyword>
<keyword id="KW-0820">tRNA-binding</keyword>
<sequence length="124" mass="13600">MVTINQLVGNARSIRVVKSSVPALESCPQKRGVCIRVYTTTPKKPNSALRKVCRVRLTNGLEVTCYIGGEGHNLQEHASILIRGGRVKDLPGVRYHVVRGALDCSGVKDRKNGRSKYGTKKLKS</sequence>
<dbReference type="EMBL" id="BX248583">
    <property type="protein sequence ID" value="CAD83249.1"/>
    <property type="molecule type" value="Genomic_DNA"/>
</dbReference>
<dbReference type="SMR" id="Q7VRN7"/>
<dbReference type="STRING" id="203907.Bfl567"/>
<dbReference type="KEGG" id="bfl:Bfl567"/>
<dbReference type="eggNOG" id="COG0048">
    <property type="taxonomic scope" value="Bacteria"/>
</dbReference>
<dbReference type="HOGENOM" id="CLU_104295_1_2_6"/>
<dbReference type="OrthoDB" id="9802366at2"/>
<dbReference type="Proteomes" id="UP000002192">
    <property type="component" value="Chromosome"/>
</dbReference>
<dbReference type="GO" id="GO:0015935">
    <property type="term" value="C:small ribosomal subunit"/>
    <property type="evidence" value="ECO:0007669"/>
    <property type="project" value="InterPro"/>
</dbReference>
<dbReference type="GO" id="GO:0019843">
    <property type="term" value="F:rRNA binding"/>
    <property type="evidence" value="ECO:0007669"/>
    <property type="project" value="UniProtKB-UniRule"/>
</dbReference>
<dbReference type="GO" id="GO:0003735">
    <property type="term" value="F:structural constituent of ribosome"/>
    <property type="evidence" value="ECO:0007669"/>
    <property type="project" value="InterPro"/>
</dbReference>
<dbReference type="GO" id="GO:0000049">
    <property type="term" value="F:tRNA binding"/>
    <property type="evidence" value="ECO:0007669"/>
    <property type="project" value="UniProtKB-UniRule"/>
</dbReference>
<dbReference type="GO" id="GO:0006412">
    <property type="term" value="P:translation"/>
    <property type="evidence" value="ECO:0007669"/>
    <property type="project" value="UniProtKB-UniRule"/>
</dbReference>
<dbReference type="CDD" id="cd03368">
    <property type="entry name" value="Ribosomal_S12"/>
    <property type="match status" value="1"/>
</dbReference>
<dbReference type="FunFam" id="2.40.50.140:FF:000001">
    <property type="entry name" value="30S ribosomal protein S12"/>
    <property type="match status" value="1"/>
</dbReference>
<dbReference type="Gene3D" id="2.40.50.140">
    <property type="entry name" value="Nucleic acid-binding proteins"/>
    <property type="match status" value="1"/>
</dbReference>
<dbReference type="HAMAP" id="MF_00403_B">
    <property type="entry name" value="Ribosomal_uS12_B"/>
    <property type="match status" value="1"/>
</dbReference>
<dbReference type="InterPro" id="IPR012340">
    <property type="entry name" value="NA-bd_OB-fold"/>
</dbReference>
<dbReference type="InterPro" id="IPR006032">
    <property type="entry name" value="Ribosomal_uS12"/>
</dbReference>
<dbReference type="InterPro" id="IPR005679">
    <property type="entry name" value="Ribosomal_uS12_bac"/>
</dbReference>
<dbReference type="NCBIfam" id="TIGR00981">
    <property type="entry name" value="rpsL_bact"/>
    <property type="match status" value="1"/>
</dbReference>
<dbReference type="PANTHER" id="PTHR11652">
    <property type="entry name" value="30S RIBOSOMAL PROTEIN S12 FAMILY MEMBER"/>
    <property type="match status" value="1"/>
</dbReference>
<dbReference type="Pfam" id="PF00164">
    <property type="entry name" value="Ribosom_S12_S23"/>
    <property type="match status" value="1"/>
</dbReference>
<dbReference type="PIRSF" id="PIRSF002133">
    <property type="entry name" value="Ribosomal_S12/S23"/>
    <property type="match status" value="1"/>
</dbReference>
<dbReference type="PRINTS" id="PR01034">
    <property type="entry name" value="RIBOSOMALS12"/>
</dbReference>
<dbReference type="SUPFAM" id="SSF50249">
    <property type="entry name" value="Nucleic acid-binding proteins"/>
    <property type="match status" value="1"/>
</dbReference>
<dbReference type="PROSITE" id="PS00055">
    <property type="entry name" value="RIBOSOMAL_S12"/>
    <property type="match status" value="1"/>
</dbReference>
<organism>
    <name type="scientific">Blochmanniella floridana</name>
    <dbReference type="NCBI Taxonomy" id="203907"/>
    <lineage>
        <taxon>Bacteria</taxon>
        <taxon>Pseudomonadati</taxon>
        <taxon>Pseudomonadota</taxon>
        <taxon>Gammaproteobacteria</taxon>
        <taxon>Enterobacterales</taxon>
        <taxon>Enterobacteriaceae</taxon>
        <taxon>ant endosymbionts</taxon>
        <taxon>Candidatus Blochmanniella</taxon>
    </lineage>
</organism>
<feature type="chain" id="PRO_0000146199" description="Small ribosomal subunit protein uS12">
    <location>
        <begin position="1"/>
        <end position="124"/>
    </location>
</feature>
<feature type="modified residue" description="3-methylthioaspartic acid" evidence="1">
    <location>
        <position position="89"/>
    </location>
</feature>
<protein>
    <recommendedName>
        <fullName evidence="2">Small ribosomal subunit protein uS12</fullName>
    </recommendedName>
    <alternativeName>
        <fullName evidence="3">30S ribosomal protein S12</fullName>
    </alternativeName>
</protein>
<accession>Q7VRN7</accession>
<comment type="function">
    <text evidence="2">With S4 and S5 plays an important role in translational accuracy.</text>
</comment>
<comment type="function">
    <text evidence="2">Interacts with and stabilizes bases of the 16S rRNA that are involved in tRNA selection in the A site and with the mRNA backbone. Located at the interface of the 30S and 50S subunits, it traverses the body of the 30S subunit contacting proteins on the other side and probably holding the rRNA structure together. The combined cluster of proteins S8, S12 and S17 appears to hold together the shoulder and platform of the 30S subunit.</text>
</comment>
<comment type="subunit">
    <text evidence="2">Part of the 30S ribosomal subunit. Contacts proteins S8 and S17. May interact with IF1 in the 30S initiation complex.</text>
</comment>
<comment type="similarity">
    <text evidence="2">Belongs to the universal ribosomal protein uS12 family.</text>
</comment>
<evidence type="ECO:0000250" key="1"/>
<evidence type="ECO:0000255" key="2">
    <source>
        <dbReference type="HAMAP-Rule" id="MF_00403"/>
    </source>
</evidence>
<evidence type="ECO:0000305" key="3"/>